<comment type="subcellular location">
    <subcellularLocation>
        <location evidence="4">Cell membrane</location>
        <topology evidence="4">Multi-pass membrane protein</topology>
    </subcellularLocation>
</comment>
<comment type="similarity">
    <text evidence="4">Belongs to the adenylyl cyclase class-3 family.</text>
</comment>
<gene>
    <name type="ordered locus">Rv1318c</name>
    <name type="ORF">MTCY130.03c</name>
</gene>
<keyword id="KW-1003">Cell membrane</keyword>
<keyword id="KW-0472">Membrane</keyword>
<keyword id="KW-1185">Reference proteome</keyword>
<keyword id="KW-0812">Transmembrane</keyword>
<keyword id="KW-1133">Transmembrane helix</keyword>
<dbReference type="EMBL" id="AL123456">
    <property type="protein sequence ID" value="CCP44075.1"/>
    <property type="molecule type" value="Genomic_DNA"/>
</dbReference>
<dbReference type="PIR" id="B70769">
    <property type="entry name" value="B70769"/>
</dbReference>
<dbReference type="RefSeq" id="NP_215834.1">
    <property type="nucleotide sequence ID" value="NC_000962.3"/>
</dbReference>
<dbReference type="RefSeq" id="WP_003406864.1">
    <property type="nucleotide sequence ID" value="NZ_NVQJ01000059.1"/>
</dbReference>
<dbReference type="SMR" id="P9WQ33"/>
<dbReference type="FunCoup" id="P9WQ33">
    <property type="interactions" value="3"/>
</dbReference>
<dbReference type="STRING" id="83332.Rv1318c"/>
<dbReference type="PaxDb" id="83332-Rv1318c"/>
<dbReference type="DNASU" id="886910"/>
<dbReference type="GeneID" id="886910"/>
<dbReference type="KEGG" id="mtu:Rv1318c"/>
<dbReference type="KEGG" id="mtv:RVBD_1318c"/>
<dbReference type="TubercuList" id="Rv1318c"/>
<dbReference type="eggNOG" id="COG2114">
    <property type="taxonomic scope" value="Bacteria"/>
</dbReference>
<dbReference type="eggNOG" id="COG3850">
    <property type="taxonomic scope" value="Bacteria"/>
</dbReference>
<dbReference type="InParanoid" id="P9WQ33"/>
<dbReference type="OrthoDB" id="368920at2"/>
<dbReference type="PhylomeDB" id="P9WQ33"/>
<dbReference type="BRENDA" id="4.6.1.1">
    <property type="organism ID" value="25548"/>
</dbReference>
<dbReference type="Proteomes" id="UP000001584">
    <property type="component" value="Chromosome"/>
</dbReference>
<dbReference type="GO" id="GO:0005829">
    <property type="term" value="C:cytosol"/>
    <property type="evidence" value="ECO:0007005"/>
    <property type="project" value="MTBBASE"/>
</dbReference>
<dbReference type="GO" id="GO:0005886">
    <property type="term" value="C:plasma membrane"/>
    <property type="evidence" value="ECO:0007669"/>
    <property type="project" value="UniProtKB-SubCell"/>
</dbReference>
<dbReference type="GO" id="GO:0004016">
    <property type="term" value="F:adenylate cyclase activity"/>
    <property type="evidence" value="ECO:0000314"/>
    <property type="project" value="MTBBASE"/>
</dbReference>
<dbReference type="GO" id="GO:0006171">
    <property type="term" value="P:cAMP biosynthetic process"/>
    <property type="evidence" value="ECO:0000314"/>
    <property type="project" value="MTBBASE"/>
</dbReference>
<dbReference type="GO" id="GO:0035556">
    <property type="term" value="P:intracellular signal transduction"/>
    <property type="evidence" value="ECO:0007669"/>
    <property type="project" value="InterPro"/>
</dbReference>
<dbReference type="CDD" id="cd07302">
    <property type="entry name" value="CHD"/>
    <property type="match status" value="1"/>
</dbReference>
<dbReference type="CDD" id="cd06225">
    <property type="entry name" value="HAMP"/>
    <property type="match status" value="1"/>
</dbReference>
<dbReference type="FunFam" id="3.30.70.1230:FF:000016">
    <property type="entry name" value="Adenylate/guanylate cyclase domain-containing protein"/>
    <property type="match status" value="1"/>
</dbReference>
<dbReference type="Gene3D" id="6.10.340.10">
    <property type="match status" value="1"/>
</dbReference>
<dbReference type="Gene3D" id="3.30.70.1230">
    <property type="entry name" value="Nucleotide cyclase"/>
    <property type="match status" value="1"/>
</dbReference>
<dbReference type="InterPro" id="IPR001054">
    <property type="entry name" value="A/G_cyclase"/>
</dbReference>
<dbReference type="InterPro" id="IPR050697">
    <property type="entry name" value="Adenylyl/Guanylyl_Cyclase_3/4"/>
</dbReference>
<dbReference type="InterPro" id="IPR003660">
    <property type="entry name" value="HAMP_dom"/>
</dbReference>
<dbReference type="InterPro" id="IPR029787">
    <property type="entry name" value="Nucleotide_cyclase"/>
</dbReference>
<dbReference type="PANTHER" id="PTHR43081">
    <property type="entry name" value="ADENYLATE CYCLASE, TERMINAL-DIFFERENTIATION SPECIFIC-RELATED"/>
    <property type="match status" value="1"/>
</dbReference>
<dbReference type="PANTHER" id="PTHR43081:SF17">
    <property type="entry name" value="BLL5647 PROTEIN"/>
    <property type="match status" value="1"/>
</dbReference>
<dbReference type="Pfam" id="PF00211">
    <property type="entry name" value="Guanylate_cyc"/>
    <property type="match status" value="1"/>
</dbReference>
<dbReference type="Pfam" id="PF00672">
    <property type="entry name" value="HAMP"/>
    <property type="match status" value="1"/>
</dbReference>
<dbReference type="SMART" id="SM00044">
    <property type="entry name" value="CYCc"/>
    <property type="match status" value="1"/>
</dbReference>
<dbReference type="SMART" id="SM00304">
    <property type="entry name" value="HAMP"/>
    <property type="match status" value="1"/>
</dbReference>
<dbReference type="SUPFAM" id="SSF158472">
    <property type="entry name" value="HAMP domain-like"/>
    <property type="match status" value="1"/>
</dbReference>
<dbReference type="SUPFAM" id="SSF55073">
    <property type="entry name" value="Nucleotide cyclase"/>
    <property type="match status" value="1"/>
</dbReference>
<dbReference type="PROSITE" id="PS50125">
    <property type="entry name" value="GUANYLATE_CYCLASE_2"/>
    <property type="match status" value="1"/>
</dbReference>
<dbReference type="PROSITE" id="PS50885">
    <property type="entry name" value="HAMP"/>
    <property type="match status" value="1"/>
</dbReference>
<protein>
    <recommendedName>
        <fullName>Uncharacterized protein Rv1318c</fullName>
    </recommendedName>
</protein>
<reference key="1">
    <citation type="journal article" date="1998" name="Nature">
        <title>Deciphering the biology of Mycobacterium tuberculosis from the complete genome sequence.</title>
        <authorList>
            <person name="Cole S.T."/>
            <person name="Brosch R."/>
            <person name="Parkhill J."/>
            <person name="Garnier T."/>
            <person name="Churcher C.M."/>
            <person name="Harris D.E."/>
            <person name="Gordon S.V."/>
            <person name="Eiglmeier K."/>
            <person name="Gas S."/>
            <person name="Barry C.E. III"/>
            <person name="Tekaia F."/>
            <person name="Badcock K."/>
            <person name="Basham D."/>
            <person name="Brown D."/>
            <person name="Chillingworth T."/>
            <person name="Connor R."/>
            <person name="Davies R.M."/>
            <person name="Devlin K."/>
            <person name="Feltwell T."/>
            <person name="Gentles S."/>
            <person name="Hamlin N."/>
            <person name="Holroyd S."/>
            <person name="Hornsby T."/>
            <person name="Jagels K."/>
            <person name="Krogh A."/>
            <person name="McLean J."/>
            <person name="Moule S."/>
            <person name="Murphy L.D."/>
            <person name="Oliver S."/>
            <person name="Osborne J."/>
            <person name="Quail M.A."/>
            <person name="Rajandream M.A."/>
            <person name="Rogers J."/>
            <person name="Rutter S."/>
            <person name="Seeger K."/>
            <person name="Skelton S."/>
            <person name="Squares S."/>
            <person name="Squares R."/>
            <person name="Sulston J.E."/>
            <person name="Taylor K."/>
            <person name="Whitehead S."/>
            <person name="Barrell B.G."/>
        </authorList>
    </citation>
    <scope>NUCLEOTIDE SEQUENCE [LARGE SCALE GENOMIC DNA]</scope>
    <source>
        <strain>ATCC 25618 / H37Rv</strain>
    </source>
</reference>
<reference key="2">
    <citation type="journal article" date="2011" name="Mol. Cell. Proteomics">
        <title>Proteogenomic analysis of Mycobacterium tuberculosis by high resolution mass spectrometry.</title>
        <authorList>
            <person name="Kelkar D.S."/>
            <person name="Kumar D."/>
            <person name="Kumar P."/>
            <person name="Balakrishnan L."/>
            <person name="Muthusamy B."/>
            <person name="Yadav A.K."/>
            <person name="Shrivastava P."/>
            <person name="Marimuthu A."/>
            <person name="Anand S."/>
            <person name="Sundaram H."/>
            <person name="Kingsbury R."/>
            <person name="Harsha H.C."/>
            <person name="Nair B."/>
            <person name="Prasad T.S."/>
            <person name="Chauhan D.S."/>
            <person name="Katoch K."/>
            <person name="Katoch V.M."/>
            <person name="Kumar P."/>
            <person name="Chaerkady R."/>
            <person name="Ramachandran S."/>
            <person name="Dash D."/>
            <person name="Pandey A."/>
        </authorList>
    </citation>
    <scope>IDENTIFICATION BY MASS SPECTROMETRY [LARGE SCALE ANALYSIS]</scope>
    <source>
        <strain>ATCC 25618 / H37Rv</strain>
    </source>
</reference>
<feature type="chain" id="PRO_0000195752" description="Uncharacterized protein Rv1318c">
    <location>
        <begin position="1"/>
        <end position="541"/>
    </location>
</feature>
<feature type="transmembrane region" description="Helical" evidence="1">
    <location>
        <begin position="57"/>
        <end position="77"/>
    </location>
</feature>
<feature type="transmembrane region" description="Helical" evidence="1">
    <location>
        <begin position="90"/>
        <end position="110"/>
    </location>
</feature>
<feature type="transmembrane region" description="Helical" evidence="1">
    <location>
        <begin position="144"/>
        <end position="164"/>
    </location>
</feature>
<feature type="transmembrane region" description="Helical" evidence="1">
    <location>
        <begin position="167"/>
        <end position="187"/>
    </location>
</feature>
<feature type="transmembrane region" description="Helical" evidence="1">
    <location>
        <begin position="221"/>
        <end position="241"/>
    </location>
</feature>
<feature type="transmembrane region" description="Helical" evidence="1">
    <location>
        <begin position="257"/>
        <end position="277"/>
    </location>
</feature>
<feature type="domain" description="HAMP" evidence="3">
    <location>
        <begin position="278"/>
        <end position="329"/>
    </location>
</feature>
<feature type="domain" description="Guanylate cyclase" evidence="2">
    <location>
        <begin position="361"/>
        <end position="485"/>
    </location>
</feature>
<name>Y1318_MYCTU</name>
<sequence length="541" mass="59332">MSAKKSTAQRLGRVLETVTRQSGRLPETPAYGSWLLGRVSESQRRRRVRIQVMLTALVVTANLLGIGVALLLVTIAIPEPSIVRDTPRWLTFGVVPGYVLLALALGSYALTRQTVQALRWAIEGRKPTREEERRTFLAPWRVAVGHLMFWGVGTALLTTLYGLINNAFIPRFLFAVSFCGVLVATATYLHTEFALRPFAAQALEAGPPPRRLAPGILGRTMVVWLLGSGVPVVGIALMAMFEMVLLNLTRMQFATGVLIISMVTLVFGFILMWILAWLTATPVRVVRAALRRVERGELRTNLVVFDGTELGELQRGFNAMVAGLRERERVRDLFGRHVGREVAAAAERERSKLGGEERHVAVVFIDIVGSTQLVTSRPPADVVKLLNKFFAIVVDEVDRHHGLVNKFEGDASLTIFGAPNRLPCPEDKALAAARAIADRLVNEMPECQAGIGVAAGQVIAGNVGARERFEYTVIGEPVNEAARLCELAKSRPGKLLASAQAVDAASEEERARWSLGRHVKLRGHDQPVRLAKPVGLTKPRR</sequence>
<proteinExistence type="evidence at protein level"/>
<accession>P9WQ33</accession>
<accession>L0T7X3</accession>
<accession>P63527</accession>
<accession>Q10631</accession>
<organism>
    <name type="scientific">Mycobacterium tuberculosis (strain ATCC 25618 / H37Rv)</name>
    <dbReference type="NCBI Taxonomy" id="83332"/>
    <lineage>
        <taxon>Bacteria</taxon>
        <taxon>Bacillati</taxon>
        <taxon>Actinomycetota</taxon>
        <taxon>Actinomycetes</taxon>
        <taxon>Mycobacteriales</taxon>
        <taxon>Mycobacteriaceae</taxon>
        <taxon>Mycobacterium</taxon>
        <taxon>Mycobacterium tuberculosis complex</taxon>
    </lineage>
</organism>
<evidence type="ECO:0000255" key="1"/>
<evidence type="ECO:0000255" key="2">
    <source>
        <dbReference type="PROSITE-ProRule" id="PRU00099"/>
    </source>
</evidence>
<evidence type="ECO:0000255" key="3">
    <source>
        <dbReference type="PROSITE-ProRule" id="PRU00102"/>
    </source>
</evidence>
<evidence type="ECO:0000305" key="4"/>